<dbReference type="EC" id="7.1.1.2" evidence="1"/>
<dbReference type="EMBL" id="AB011213">
    <property type="protein sequence ID" value="BAA32105.1"/>
    <property type="molecule type" value="Genomic_DNA"/>
</dbReference>
<dbReference type="EMBL" id="AJ421451">
    <property type="protein sequence ID" value="CAD13421.1"/>
    <property type="molecule type" value="Genomic_DNA"/>
</dbReference>
<dbReference type="RefSeq" id="NP_659288.1">
    <property type="nucleotide sequence ID" value="NC_004025.1"/>
</dbReference>
<dbReference type="SMR" id="O78696"/>
<dbReference type="GO" id="GO:0005743">
    <property type="term" value="C:mitochondrial inner membrane"/>
    <property type="evidence" value="ECO:0000250"/>
    <property type="project" value="UniProtKB"/>
</dbReference>
<dbReference type="GO" id="GO:0008137">
    <property type="term" value="F:NADH dehydrogenase (ubiquinone) activity"/>
    <property type="evidence" value="ECO:0000250"/>
    <property type="project" value="UniProtKB"/>
</dbReference>
<dbReference type="GO" id="GO:0006120">
    <property type="term" value="P:mitochondrial electron transport, NADH to ubiquinone"/>
    <property type="evidence" value="ECO:0000250"/>
    <property type="project" value="UniProtKB"/>
</dbReference>
<dbReference type="GO" id="GO:0032981">
    <property type="term" value="P:mitochondrial respiratory chain complex I assembly"/>
    <property type="evidence" value="ECO:0000250"/>
    <property type="project" value="UniProtKB"/>
</dbReference>
<dbReference type="HAMAP" id="MF_01350">
    <property type="entry name" value="NDH1_NuoH"/>
    <property type="match status" value="1"/>
</dbReference>
<dbReference type="InterPro" id="IPR001694">
    <property type="entry name" value="NADH_UbQ_OxRdtase_su1/FPO"/>
</dbReference>
<dbReference type="InterPro" id="IPR018086">
    <property type="entry name" value="NADH_UbQ_OxRdtase_su1_CS"/>
</dbReference>
<dbReference type="PANTHER" id="PTHR11432">
    <property type="entry name" value="NADH DEHYDROGENASE SUBUNIT 1"/>
    <property type="match status" value="1"/>
</dbReference>
<dbReference type="PANTHER" id="PTHR11432:SF3">
    <property type="entry name" value="NADH-UBIQUINONE OXIDOREDUCTASE CHAIN 1"/>
    <property type="match status" value="1"/>
</dbReference>
<dbReference type="Pfam" id="PF00146">
    <property type="entry name" value="NADHdh"/>
    <property type="match status" value="1"/>
</dbReference>
<dbReference type="PROSITE" id="PS00667">
    <property type="entry name" value="COMPLEX1_ND1_1"/>
    <property type="match status" value="1"/>
</dbReference>
<dbReference type="PROSITE" id="PS00668">
    <property type="entry name" value="COMPLEX1_ND1_2"/>
    <property type="match status" value="1"/>
</dbReference>
<keyword id="KW-0249">Electron transport</keyword>
<keyword id="KW-0472">Membrane</keyword>
<keyword id="KW-0496">Mitochondrion</keyword>
<keyword id="KW-0999">Mitochondrion inner membrane</keyword>
<keyword id="KW-0520">NAD</keyword>
<keyword id="KW-0679">Respiratory chain</keyword>
<keyword id="KW-1278">Translocase</keyword>
<keyword id="KW-0812">Transmembrane</keyword>
<keyword id="KW-1133">Transmembrane helix</keyword>
<keyword id="KW-0813">Transport</keyword>
<keyword id="KW-0830">Ubiquinone</keyword>
<comment type="function">
    <text evidence="1">Core subunit of the mitochondrial membrane respiratory chain NADH dehydrogenase (Complex I) which catalyzes electron transfer from NADH through the respiratory chain, using ubiquinone as an electron acceptor. Essential for the catalytic activity and assembly of complex I.</text>
</comment>
<comment type="catalytic activity">
    <reaction evidence="1">
        <text>a ubiquinone + NADH + 5 H(+)(in) = a ubiquinol + NAD(+) + 4 H(+)(out)</text>
        <dbReference type="Rhea" id="RHEA:29091"/>
        <dbReference type="Rhea" id="RHEA-COMP:9565"/>
        <dbReference type="Rhea" id="RHEA-COMP:9566"/>
        <dbReference type="ChEBI" id="CHEBI:15378"/>
        <dbReference type="ChEBI" id="CHEBI:16389"/>
        <dbReference type="ChEBI" id="CHEBI:17976"/>
        <dbReference type="ChEBI" id="CHEBI:57540"/>
        <dbReference type="ChEBI" id="CHEBI:57945"/>
        <dbReference type="EC" id="7.1.1.2"/>
    </reaction>
</comment>
<comment type="subunit">
    <text evidence="2">Core subunit of respiratory chain NADH dehydrogenase (Complex I) which is composed of 45 different subunits.</text>
</comment>
<comment type="subcellular location">
    <subcellularLocation>
        <location evidence="2">Mitochondrion inner membrane</location>
        <topology evidence="3">Multi-pass membrane protein</topology>
    </subcellularLocation>
</comment>
<comment type="similarity">
    <text evidence="4">Belongs to the complex I subunit 1 family.</text>
</comment>
<feature type="chain" id="PRO_0000117419" description="NADH-ubiquinone oxidoreductase chain 1">
    <location>
        <begin position="1"/>
        <end position="318"/>
    </location>
</feature>
<feature type="transmembrane region" description="Helical" evidence="3">
    <location>
        <begin position="2"/>
        <end position="22"/>
    </location>
</feature>
<feature type="transmembrane region" description="Helical" evidence="3">
    <location>
        <begin position="76"/>
        <end position="96"/>
    </location>
</feature>
<feature type="transmembrane region" description="Helical" evidence="3">
    <location>
        <begin position="102"/>
        <end position="122"/>
    </location>
</feature>
<feature type="transmembrane region" description="Helical" evidence="3">
    <location>
        <begin position="146"/>
        <end position="166"/>
    </location>
</feature>
<feature type="transmembrane region" description="Helical" evidence="3">
    <location>
        <begin position="171"/>
        <end position="191"/>
    </location>
</feature>
<feature type="transmembrane region" description="Helical" evidence="3">
    <location>
        <begin position="217"/>
        <end position="237"/>
    </location>
</feature>
<feature type="transmembrane region" description="Helical" evidence="3">
    <location>
        <begin position="253"/>
        <end position="273"/>
    </location>
</feature>
<feature type="transmembrane region" description="Helical" evidence="3">
    <location>
        <begin position="294"/>
        <end position="314"/>
    </location>
</feature>
<feature type="sequence conflict" description="In Ref. 1; BAA32105." evidence="4" ref="1">
    <original>T</original>
    <variation>M</variation>
    <location>
        <position position="85"/>
    </location>
</feature>
<feature type="sequence conflict" description="In Ref. 1; BAA32105." evidence="4" ref="1">
    <original>F</original>
    <variation>V</variation>
    <location>
        <position position="144"/>
    </location>
</feature>
<evidence type="ECO:0000250" key="1">
    <source>
        <dbReference type="UniProtKB" id="P03886"/>
    </source>
</evidence>
<evidence type="ECO:0000250" key="2">
    <source>
        <dbReference type="UniProtKB" id="P03887"/>
    </source>
</evidence>
<evidence type="ECO:0000255" key="3"/>
<evidence type="ECO:0000305" key="4"/>
<gene>
    <name type="primary">MT-ND1</name>
    <name type="synonym">MTND1</name>
    <name type="synonym">NADH1</name>
    <name type="synonym">ND1</name>
</gene>
<reference key="1">
    <citation type="journal article" date="1998" name="J. Mol. Evol.">
        <title>Conflict among individual mitochondrial proteins in resolving the phylogeny of eutherian orders.</title>
        <authorList>
            <person name="Cao Y."/>
            <person name="Janke A."/>
            <person name="Waddell P.J."/>
            <person name="Westerman M."/>
            <person name="Takenaka O."/>
            <person name="Murata S."/>
            <person name="Okada N."/>
            <person name="Paeaebo S."/>
            <person name="Hasegawa M."/>
        </authorList>
    </citation>
    <scope>NUCLEOTIDE SEQUENCE [GENOMIC DNA]</scope>
    <source>
        <tissue>Liver</tissue>
    </source>
</reference>
<reference key="2">
    <citation type="journal article" date="2002" name="Proc. Natl. Acad. Sci. U.S.A.">
        <title>Mammalian mitogenomic relationships and the root of the eutherian tree.</title>
        <authorList>
            <person name="Arnason U."/>
            <person name="Adegoke J.A."/>
            <person name="Bodin K."/>
            <person name="Born E.W."/>
            <person name="Esa Y.B."/>
            <person name="Gullberg A."/>
            <person name="Nilsson M."/>
            <person name="Short R.V."/>
            <person name="Xu X."/>
            <person name="Janke A."/>
        </authorList>
    </citation>
    <scope>NUCLEOTIDE SEQUENCE [GENOMIC DNA]</scope>
</reference>
<geneLocation type="mitochondrion"/>
<name>NU1M_LEMCA</name>
<protein>
    <recommendedName>
        <fullName>NADH-ubiquinone oxidoreductase chain 1</fullName>
        <ecNumber evidence="1">7.1.1.2</ecNumber>
    </recommendedName>
    <alternativeName>
        <fullName>NADH dehydrogenase subunit 1</fullName>
    </alternativeName>
</protein>
<proteinExistence type="inferred from homology"/>
<sequence length="318" mass="35797">MFMINLFLLIIPILLAMAFLTLAERKILGYMQLRKGPNVVGPHGMIQPFADAMKLFIKEPLRPLTSSSSLYTIAPTLALTIALVTWIPLPLPYPLINMNMGLLFILATSSLAVYSILWSGWASNSKYALIGALRAVAQTISYEFTLAIILLSLLLMNGSFTLSTLITTQEYLWLIIPSWPLAMMWFISTLAETNRAPFDLTEGESELVSGFNVEYAAGPFALFFMAEYTNIIMMNALTTTLFLGALYNLHMPETYTTSFAIKTLLLTILFLWVRASYPRFRYDQLMHLLWKNFLPLTLALCMWYVSLPVLASCIPPQA</sequence>
<organism>
    <name type="scientific">Lemur catta</name>
    <name type="common">Ring-tailed lemur</name>
    <dbReference type="NCBI Taxonomy" id="9447"/>
    <lineage>
        <taxon>Eukaryota</taxon>
        <taxon>Metazoa</taxon>
        <taxon>Chordata</taxon>
        <taxon>Craniata</taxon>
        <taxon>Vertebrata</taxon>
        <taxon>Euteleostomi</taxon>
        <taxon>Mammalia</taxon>
        <taxon>Eutheria</taxon>
        <taxon>Euarchontoglires</taxon>
        <taxon>Primates</taxon>
        <taxon>Strepsirrhini</taxon>
        <taxon>Lemuriformes</taxon>
        <taxon>Lemuridae</taxon>
        <taxon>Lemur</taxon>
    </lineage>
</organism>
<accession>O78696</accession>
<accession>Q8LX32</accession>